<feature type="chain" id="PRO_0000058561" description="3'-5' exoribonuclease HELZ2">
    <location>
        <begin position="1"/>
        <end position="2896"/>
    </location>
</feature>
<feature type="domain" description="UvrD-like helicase ATP-binding" evidence="2">
    <location>
        <begin position="770"/>
        <end position="1126"/>
    </location>
</feature>
<feature type="domain" description="RNB" evidence="1">
    <location>
        <begin position="1581"/>
        <end position="1938"/>
    </location>
</feature>
<feature type="domain" description="UvrD-like helicase ATP-binding 2" evidence="2">
    <location>
        <begin position="2400"/>
        <end position="2675"/>
    </location>
</feature>
<feature type="zinc finger region" description="C3H1-type 1" evidence="3">
    <location>
        <begin position="90"/>
        <end position="114"/>
    </location>
</feature>
<feature type="zinc finger region" description="C3H1-type 2" evidence="3">
    <location>
        <begin position="217"/>
        <end position="246"/>
    </location>
</feature>
<feature type="zinc finger region" description="C2H2-type; atypical">
    <location>
        <begin position="287"/>
        <end position="311"/>
    </location>
</feature>
<feature type="zinc finger region" description="C3H1-type 3" evidence="3">
    <location>
        <begin position="327"/>
        <end position="357"/>
    </location>
</feature>
<feature type="region of interest" description="Interaction with THRAP3" evidence="7">
    <location>
        <begin position="810"/>
        <end position="1306"/>
    </location>
</feature>
<feature type="region of interest" description="Interaction with THRAP3" evidence="7">
    <location>
        <begin position="2382"/>
        <end position="2896"/>
    </location>
</feature>
<feature type="short sequence motif" description="DEAA box">
    <location>
        <begin position="914"/>
        <end position="917"/>
    </location>
</feature>
<feature type="short sequence motif" description="LXXLL motif 1">
    <location>
        <begin position="1322"/>
        <end position="1326"/>
    </location>
</feature>
<feature type="short sequence motif" description="LXXLL motif 2">
    <location>
        <begin position="1365"/>
        <end position="1369"/>
    </location>
</feature>
<feature type="short sequence motif" description="LXXLL motif 3">
    <location>
        <begin position="1420"/>
        <end position="1424"/>
    </location>
</feature>
<feature type="short sequence motif" description="LXXLL motif 4">
    <location>
        <begin position="2259"/>
        <end position="2263"/>
    </location>
</feature>
<feature type="short sequence motif" description="LXXLL motif 5">
    <location>
        <begin position="2476"/>
        <end position="2480"/>
    </location>
</feature>
<feature type="binding site" evidence="2">
    <location>
        <begin position="791"/>
        <end position="798"/>
    </location>
    <ligand>
        <name>ATP</name>
        <dbReference type="ChEBI" id="CHEBI:30616"/>
    </ligand>
</feature>
<feature type="binding site" evidence="1">
    <location>
        <begin position="2421"/>
        <end position="2428"/>
    </location>
    <ligand>
        <name>ATP</name>
        <dbReference type="ChEBI" id="CHEBI:30616"/>
    </ligand>
</feature>
<feature type="modified residue" description="Phosphoserine" evidence="14 15">
    <location>
        <position position="1253"/>
    </location>
</feature>
<feature type="splice variant" id="VSP_007297" description="In isoform 2." evidence="9 10">
    <location>
        <begin position="1"/>
        <end position="816"/>
    </location>
</feature>
<feature type="splice variant" id="VSP_007298" description="In isoform 2." evidence="9 10">
    <original>LICTHTN</original>
    <variation>MSSSPSR</variation>
    <location>
        <begin position="817"/>
        <end position="823"/>
    </location>
</feature>
<feature type="sequence variant" id="VAR_015597" description="In dbSNP:rs438363." evidence="4 5 6">
    <original>S</original>
    <variation>N</variation>
    <location>
        <position position="1035"/>
    </location>
</feature>
<feature type="sequence variant" id="VAR_015598" description="In dbSNP:rs310632." evidence="4 5 6">
    <original>H</original>
    <variation>R</variation>
    <location>
        <position position="1370"/>
    </location>
</feature>
<feature type="sequence variant" id="VAR_047038" description="In dbSNP:rs35817585.">
    <original>S</original>
    <variation>L</variation>
    <location>
        <position position="1399"/>
    </location>
</feature>
<feature type="sequence variant" id="VAR_047039" description="In dbSNP:rs310631.">
    <original>V</original>
    <variation>L</variation>
    <location>
        <position position="1555"/>
    </location>
</feature>
<feature type="sequence variant" id="VAR_047040" description="In dbSNP:rs3810487.">
    <original>R</original>
    <variation>K</variation>
    <location>
        <position position="1628"/>
    </location>
</feature>
<feature type="sequence variant" id="VAR_047041" description="In dbSNP:rs3810486.">
    <original>L</original>
    <variation>R</variation>
    <location>
        <position position="2068"/>
    </location>
</feature>
<feature type="sequence variant" id="VAR_047042" description="In dbSNP:rs34980032.">
    <original>T</original>
    <variation>A</variation>
    <location>
        <position position="2136"/>
    </location>
</feature>
<feature type="sequence variant" id="VAR_015599" description="In dbSNP:rs3810485." evidence="4 5 6">
    <original>P</original>
    <variation>L</variation>
    <location>
        <position position="2263"/>
    </location>
</feature>
<feature type="sequence variant" id="VAR_015600" description="In dbSNP:rs3810483." evidence="4 5 6">
    <original>Q</original>
    <variation>E</variation>
    <location>
        <position position="2296"/>
    </location>
</feature>
<feature type="sequence variant" id="VAR_047043" description="In dbSNP:rs3810481.">
    <original>T</original>
    <variation>M</variation>
    <location>
        <position position="2417"/>
    </location>
</feature>
<feature type="mutagenesis site" description="Loss of 3'-5' exoribonuclease activity. No effect on ATP-dependent RNA helicase activity." evidence="8">
    <original>C</original>
    <variation>F</variation>
    <location>
        <position position="1598"/>
    </location>
</feature>
<feature type="mutagenesis site" description="Loss of 3'-5' exoribonuclease activity." evidence="8">
    <original>D</original>
    <variation>N</variation>
    <location>
        <position position="1601"/>
    </location>
</feature>
<feature type="mutagenesis site" description="No effect on 3'-5' exoribonuclease and ATP-dependent RNA helicase activity." evidence="8">
    <original>S</original>
    <variation>L</variation>
    <location>
        <position position="1920"/>
    </location>
</feature>
<feature type="mutagenesis site" description="No effect on 3'-5' exoribonuclease and ATP-dependent helicase activity." evidence="8">
    <original>R</original>
    <variation>L</variation>
    <location>
        <position position="1923"/>
    </location>
</feature>
<feature type="mutagenesis site" description="Loss of 3'-5' exoribonuclease activity. No effect on ATP-dependent RNA helicase activity." evidence="8">
    <original>T</original>
    <variation>M</variation>
    <location>
        <position position="2151"/>
    </location>
</feature>
<feature type="sequence conflict" description="In Ref. 2; BAE46995." evidence="11" ref="2">
    <original>V</original>
    <variation>A</variation>
    <location>
        <position position="443"/>
    </location>
</feature>
<feature type="sequence conflict" description="In Ref. 2; BAE46995." evidence="11" ref="2">
    <original>FNR</original>
    <variation>SNH</variation>
    <location>
        <begin position="574"/>
        <end position="576"/>
    </location>
</feature>
<feature type="sequence conflict" description="In Ref. 2; BAE46995." evidence="11" ref="2">
    <original>E</original>
    <variation>G</variation>
    <location>
        <position position="689"/>
    </location>
</feature>
<feature type="sequence conflict" description="In Ref. 2; BAE46995." evidence="11" ref="2">
    <original>G</original>
    <variation>D</variation>
    <location>
        <position position="1083"/>
    </location>
</feature>
<feature type="sequence conflict" description="In Ref. 2; BAE46995." evidence="11" ref="2">
    <original>V</original>
    <variation>A</variation>
    <location>
        <position position="2120"/>
    </location>
</feature>
<feature type="sequence conflict" description="In Ref. 2; BAE46995." evidence="11" ref="2">
    <original>G</original>
    <variation>S</variation>
    <location>
        <position position="2450"/>
    </location>
</feature>
<feature type="sequence conflict" description="In Ref. 2; BAE46995." evidence="11" ref="2">
    <original>V</original>
    <variation>A</variation>
    <location>
        <position position="2630"/>
    </location>
</feature>
<feature type="sequence conflict" description="In Ref. 2; BAE46995." evidence="11" ref="2">
    <original>F</original>
    <variation>L</variation>
    <location>
        <position position="2873"/>
    </location>
</feature>
<evidence type="ECO:0000255" key="1"/>
<evidence type="ECO:0000255" key="2">
    <source>
        <dbReference type="PROSITE-ProRule" id="PRU00560"/>
    </source>
</evidence>
<evidence type="ECO:0000255" key="3">
    <source>
        <dbReference type="PROSITE-ProRule" id="PRU00723"/>
    </source>
</evidence>
<evidence type="ECO:0000269" key="4">
    <source>
    </source>
</evidence>
<evidence type="ECO:0000269" key="5">
    <source>
    </source>
</evidence>
<evidence type="ECO:0000269" key="6">
    <source>
    </source>
</evidence>
<evidence type="ECO:0000269" key="7">
    <source>
    </source>
</evidence>
<evidence type="ECO:0000269" key="8">
    <source>
    </source>
</evidence>
<evidence type="ECO:0000303" key="9">
    <source>
    </source>
</evidence>
<evidence type="ECO:0000303" key="10">
    <source>
    </source>
</evidence>
<evidence type="ECO:0000305" key="11"/>
<evidence type="ECO:0000305" key="12">
    <source>
    </source>
</evidence>
<evidence type="ECO:0000312" key="13">
    <source>
        <dbReference type="HGNC" id="HGNC:30021"/>
    </source>
</evidence>
<evidence type="ECO:0007744" key="14">
    <source>
    </source>
</evidence>
<evidence type="ECO:0007744" key="15">
    <source>
    </source>
</evidence>
<accession>Q9BYK8</accession>
<accession>Q3C2G2</accession>
<accession>Q4VXQ1</accession>
<accession>Q8TEF3</accession>
<accession>Q96ND3</accession>
<accession>Q9C094</accession>
<proteinExistence type="evidence at protein level"/>
<sequence length="2896" mass="322316">MAPPGSTLLPNSPAATRGPSLARLCALVDLCLGCSRCTQRLNESTYVLRRVEHDCSREILLARFKQATKSKVWRVVGCRPTFPRPLCYQVCHYYSPGLGCRRHRNRCTFARSREEALVWTFERQHNLQRLWLKAEVQGSGAQGGAGRAADAILTEFGGRFELLCSLCFRRCPPCICRVDPQGQCPEHGACPSLLAHVSAEGRRKQQFVVVRPRPRAGQPPAYCRFVGRGQPCWRGESRCQFAHSAVEMAVWEAEQLGGLQRGDLLTPPAPDGDGRTAPLGQPPGAQLYCPACLVTCHSQEAFENHCASSEHAQMVAFDQALPWEHRSPPPGLSKFELCPKPDLCEYGDACTKAHSAQELQEWVRRTQAVELRGQAAWQDGLVPYQERLLAEYQRSSSEVLVLAETLDGVRVTCNQPLMYQAQERKTQYSWTFAVHSEEPLLHVALLKQEPGADFSLVAPGLPPGRLYARGERFRVPSSTADFQVGVRVQAASFGTFEQWVVFDFGRRPVLLQKLGLQLGQGRRPGPCRNLALGHPEEMERWHTGNRHVVPGVERTAEQTALMAKYKGPALALEFNRSSVASGPISPTNYRQRMHQFLYEEEAAQQQLVAKLTLRGQVFLKTALQTPALNMLFAPPGALYAEVPVPSSLMPDTDQGFLLGRAVSTALVAPVPAPDNTVFEVRLERRASSEQALWLLLPARCCLALGLQPEARLVLEVQFQIDPMTFRLWHQAVDTLPEEQLVVPDLPTCALPRPWSVPPLRRGNRKQELAVALIAGWGPGDGRRVPPLLIYGPFGTGKTYTLAMASLEVIRRPETKVLICTHTNSAADIYIREYFHSHVSGGHPEATPLRVMYTDRPLSQTDPVTLQYCCLTDDRQAFRPPTRAELARHRVVVTTTSQARELRVPVGFFSHILIDEAAQMLECEALTPLAYASHGTRLVLAGDHMQVTPRLFSVARARAAEHTLLHRLFLCYQQETHEVARQSRLVFHENYRCTDAIVSFISRHFYVAKGNPIHARGKVPPHPRHYPLMFCHVAGSPDRDMSMASWLNLAEIAQVVEKVQEAYNTWPSCWGGREQRCICVVSHGAQVSALRQELRRRDLGQVSVGSFEILPGRQFRVVVLSTVHTCQSLLSPGALAPEFFTDARVLNTVLTRAQSQLVVVGDAVALCSFGACGKLWESFIRECVERHSVCPEGLSMEQVEQGVAQRRRWPPRGTQAGAAGNWEAAPEPVGDLAEEQAAVVTAMVKAEPGDEALSPASRDITATTAQTEAAAAPAGDAVKEDVVPGACAAGAAAAAGVESTEAEDAEADFWPWDGELNADDAILRELLDESQKVMVTVGEDGLLDTVARPESLQQARLYENLPPAALRKLLHAEPERYRHCSFVPETFERASAIPLDDASSGPIQVRGRLDCGMAFAGDEVLVQLLSGDKAPEGRLRGRVLGVLKRKRHELAFVCRMDTWDPRIMVPINGSVTKIFVAELKDPSQVPIYSLRKGRLQRVGLERLTAEARHSRLFWVQIVLWRQGFYYPLGIVREVLPEASTWEQGLRILGLEYSLRVPPSDQATITKVLQKYHTELGRVAGRREDCRAFLTFTVDPQGACNLDDALSVRDLGPRCEVAVHITDVASFVPRDGVLDVEARRQGAAFYAPGREPVPMLPASLCQDVLSLLPGRDRLAISLFLTMEKASGQLKSLRFAPSVVQSDRQLSYEEAEEVIRQHPGAGRELPARLDSVDACVVAACYFSRLLRRHRLRSDCFYEQPDEDGTLGFRAAHIMVKEYMIQFNRLVAEFLVGSECTRTVTPLRWQPAPRSQQLKALCEKHGDRVPLSLHLGHHLHGGGGSPPDTRLHLLASLWKQVQFAARTQDYEQMVDLVTTDDMHPFLAPAGRDLRKALERSAFGRCARGHQQQGGHYSLQVDWYTWATSPIRRYLDVVLQRQILLALGHGGSAYSARDIDGLCQAFSLQHALAQSYQRRARSLHLAVQLKAQPLDKLGFVVDVEAGSRCFRLLFPSNRETLPDPCPVPYGSLQLAEHPHALAGRPGLRLLWRRRVYSAQGSSPPLPLPGTVPDPHTLAVETALWKQLLELVELQRWPEAAALIQEKGEASQRRELVQVQRSHCGHFLEVARELGSGDTLQVQLGTSLQHGFLVPSPQLWTVAPGFSLCLEHVERPGDCFSGRVYRAPRDRYRDVDEYACVWEPFCALESATGAVAENDSVTLQHLSVSWEASRTPQGQLQGAFRLEAAFLEENCADINFSCCYLCIRLEGLPAPTASPRPGPSSLGPGLNVDPGTYTWVAHGQTQDWDQERRADRQEAPRRVHLFVHHMGMEKVPEEVLRPGTLFTVELLPKQLPDLRKEEAVRGLEEASPLVTSIALGRPVPQPLCRVIPSRFLERQTYNIPGGRHKLNPSQNVAVREALEKPFTVIQGPPGTGKTIVGLHIVFWFHKSNQEQVQPGGPPRGEKRLGGPCILYCGPSNKSVDVLAGLLLRRMELKPLRVYSEQAEASEFPVPRVGSRKLLRKSPREGRPNQSLRSITLHHRIRQAPNPYSSEIKAFDTRLQRGELFSREDLVWYKKVLWEARKFELDRHEVILCTCSCAASASLKILDVRQILVDEAGMATEPETLIPLVQFPQAEKVVLLGDHKQLRPVVKNERLQNLGLDRSLFERYHEDAHMLDTQYRMHEGICAFPSVAFYKSKLKTWQGLRRPPSVLGHAGKESCPVIFGHVQGHERSLLVSTDEGNENSKANLEEVAEVVRITKQLTLGRTVEPQDIAVLTPYNAQASEISKALRREGIAGVAVSSITKSQGSEWRYVLVSTVRTCAKSDLDQRPTKSWLKKFLGFVVDPNQVNVAVTRAQEGLCLIGDHLLLRCCPLWRSLLDFCEAQQTLVPAGQVRVCRRPTMPS</sequence>
<protein>
    <recommendedName>
        <fullName>3'-5' exoribonuclease HELZ2</fullName>
        <ecNumber evidence="8">3.1.13.1</ecNumber>
    </recommendedName>
    <alternativeName>
        <fullName>ATP-dependent RNA helicase PRIC285</fullName>
        <ecNumber evidence="8">3.6.4.13</ecNumber>
    </alternativeName>
    <alternativeName>
        <fullName>Helicase with zinc finger 2, transcriptional coactivator</fullName>
    </alternativeName>
    <alternativeName>
        <fullName evidence="11">Helicase with zinc finger domain 2</fullName>
    </alternativeName>
    <alternativeName>
        <fullName>PPAR-alpha-interacting complex protein 285</fullName>
    </alternativeName>
    <alternativeName>
        <fullName>PPAR-gamma DNA-binding domain-interacting protein 1</fullName>
        <shortName>PDIP1</shortName>
        <shortName>PPAR-gamma DBD-interacting protein 1</shortName>
    </alternativeName>
    <alternativeName>
        <fullName>Peroxisomal proliferator-activated receptor A-interacting complex 285 kDa protein</fullName>
    </alternativeName>
</protein>
<reference key="1">
    <citation type="journal article" date="2002" name="Proc. Natl. Acad. Sci. U.S.A.">
        <title>Identification of a transcriptionally active peroxisome proliferator-activated receptor alpha-interacting cofactor complex in rat liver and characterization of PRIC285 as a coactivator.</title>
        <authorList>
            <person name="Surapureddi S."/>
            <person name="Yu S."/>
            <person name="Bu H."/>
            <person name="Hashimoto T."/>
            <person name="Yeldandi A.V."/>
            <person name="Kashireddy P."/>
            <person name="Cherkaoui-Malki M."/>
            <person name="Qi C."/>
            <person name="Zhu Y.-J."/>
            <person name="Rao M.S."/>
            <person name="Reddy J.K."/>
        </authorList>
    </citation>
    <scope>NUCLEOTIDE SEQUENCE [MRNA] (ISOFORM 2)</scope>
    <scope>VARIANTS ASN-1035; ARG-1370; LEU-2263 AND GLU-2296</scope>
</reference>
<reference key="2">
    <citation type="journal article" date="2006" name="Endocrinology">
        <title>Isolation and characterization of a transcriptional cofactor and its novel isoform that bind the DNA-binding domain of peroxisome proliferator-activated receptor gamma.</title>
        <authorList>
            <person name="Tomaru T."/>
            <person name="Satoh T."/>
            <person name="Yoshino S."/>
            <person name="Ishizuka T."/>
            <person name="Hashimoto K."/>
            <person name="Monden T."/>
            <person name="Yamada M."/>
            <person name="Mori M."/>
        </authorList>
    </citation>
    <scope>NUCLEOTIDE SEQUENCE [MRNA] (ISOFORM 2)</scope>
    <scope>NUCLEOTIDE SEQUENCE [MRNA] OF 225-2896 (ISOFORM 1)</scope>
    <scope>FUNCTION</scope>
    <scope>INTERACTION WITH PPARG</scope>
    <scope>TISSUE SPECIFICITY</scope>
    <scope>DOMAIN</scope>
    <scope>VARIANTS ASN-1035; ARG-1370; LEU-2263 AND GLU-2296</scope>
</reference>
<reference key="3">
    <citation type="journal article" date="2000" name="DNA Res.">
        <title>Prediction of the coding sequences of unidentified human genes. XIX. The complete sequences of 100 new cDNA clones from brain which code for large proteins in vitro.</title>
        <authorList>
            <person name="Nagase T."/>
            <person name="Kikuno R."/>
            <person name="Hattori A."/>
            <person name="Kondo Y."/>
            <person name="Okumura K."/>
            <person name="Ohara O."/>
        </authorList>
    </citation>
    <scope>NUCLEOTIDE SEQUENCE [LARGE SCALE MRNA] (ISOFORM 2)</scope>
    <scope>VARIANTS ASN-1035; ARG-1370; LEU-2263 AND GLU-2296</scope>
    <source>
        <tissue>Brain</tissue>
    </source>
</reference>
<reference key="4">
    <citation type="journal article" date="2002" name="DNA Res.">
        <title>Construction of expression-ready cDNA clones for KIAA genes: manual curation of 330 KIAA cDNA clones.</title>
        <authorList>
            <person name="Nakajima D."/>
            <person name="Okazaki N."/>
            <person name="Yamakawa H."/>
            <person name="Kikuno R."/>
            <person name="Ohara O."/>
            <person name="Nagase T."/>
        </authorList>
    </citation>
    <scope>SEQUENCE REVISION</scope>
</reference>
<reference key="5">
    <citation type="journal article" date="2001" name="Nature">
        <title>The DNA sequence and comparative analysis of human chromosome 20.</title>
        <authorList>
            <person name="Deloukas P."/>
            <person name="Matthews L.H."/>
            <person name="Ashurst J.L."/>
            <person name="Burton J."/>
            <person name="Gilbert J.G.R."/>
            <person name="Jones M."/>
            <person name="Stavrides G."/>
            <person name="Almeida J.P."/>
            <person name="Babbage A.K."/>
            <person name="Bagguley C.L."/>
            <person name="Bailey J."/>
            <person name="Barlow K.F."/>
            <person name="Bates K.N."/>
            <person name="Beard L.M."/>
            <person name="Beare D.M."/>
            <person name="Beasley O.P."/>
            <person name="Bird C.P."/>
            <person name="Blakey S.E."/>
            <person name="Bridgeman A.M."/>
            <person name="Brown A.J."/>
            <person name="Buck D."/>
            <person name="Burrill W.D."/>
            <person name="Butler A.P."/>
            <person name="Carder C."/>
            <person name="Carter N.P."/>
            <person name="Chapman J.C."/>
            <person name="Clamp M."/>
            <person name="Clark G."/>
            <person name="Clark L.N."/>
            <person name="Clark S.Y."/>
            <person name="Clee C.M."/>
            <person name="Clegg S."/>
            <person name="Cobley V.E."/>
            <person name="Collier R.E."/>
            <person name="Connor R.E."/>
            <person name="Corby N.R."/>
            <person name="Coulson A."/>
            <person name="Coville G.J."/>
            <person name="Deadman R."/>
            <person name="Dhami P.D."/>
            <person name="Dunn M."/>
            <person name="Ellington A.G."/>
            <person name="Frankland J.A."/>
            <person name="Fraser A."/>
            <person name="French L."/>
            <person name="Garner P."/>
            <person name="Grafham D.V."/>
            <person name="Griffiths C."/>
            <person name="Griffiths M.N.D."/>
            <person name="Gwilliam R."/>
            <person name="Hall R.E."/>
            <person name="Hammond S."/>
            <person name="Harley J.L."/>
            <person name="Heath P.D."/>
            <person name="Ho S."/>
            <person name="Holden J.L."/>
            <person name="Howden P.J."/>
            <person name="Huckle E."/>
            <person name="Hunt A.R."/>
            <person name="Hunt S.E."/>
            <person name="Jekosch K."/>
            <person name="Johnson C.M."/>
            <person name="Johnson D."/>
            <person name="Kay M.P."/>
            <person name="Kimberley A.M."/>
            <person name="King A."/>
            <person name="Knights A."/>
            <person name="Laird G.K."/>
            <person name="Lawlor S."/>
            <person name="Lehvaeslaiho M.H."/>
            <person name="Leversha M.A."/>
            <person name="Lloyd C."/>
            <person name="Lloyd D.M."/>
            <person name="Lovell J.D."/>
            <person name="Marsh V.L."/>
            <person name="Martin S.L."/>
            <person name="McConnachie L.J."/>
            <person name="McLay K."/>
            <person name="McMurray A.A."/>
            <person name="Milne S.A."/>
            <person name="Mistry D."/>
            <person name="Moore M.J.F."/>
            <person name="Mullikin J.C."/>
            <person name="Nickerson T."/>
            <person name="Oliver K."/>
            <person name="Parker A."/>
            <person name="Patel R."/>
            <person name="Pearce T.A.V."/>
            <person name="Peck A.I."/>
            <person name="Phillimore B.J.C.T."/>
            <person name="Prathalingam S.R."/>
            <person name="Plumb R.W."/>
            <person name="Ramsay H."/>
            <person name="Rice C.M."/>
            <person name="Ross M.T."/>
            <person name="Scott C.E."/>
            <person name="Sehra H.K."/>
            <person name="Shownkeen R."/>
            <person name="Sims S."/>
            <person name="Skuce C.D."/>
            <person name="Smith M.L."/>
            <person name="Soderlund C."/>
            <person name="Steward C.A."/>
            <person name="Sulston J.E."/>
            <person name="Swann R.M."/>
            <person name="Sycamore N."/>
            <person name="Taylor R."/>
            <person name="Tee L."/>
            <person name="Thomas D.W."/>
            <person name="Thorpe A."/>
            <person name="Tracey A."/>
            <person name="Tromans A.C."/>
            <person name="Vaudin M."/>
            <person name="Wall M."/>
            <person name="Wallis J.M."/>
            <person name="Whitehead S.L."/>
            <person name="Whittaker P."/>
            <person name="Willey D.L."/>
            <person name="Williams L."/>
            <person name="Williams S.A."/>
            <person name="Wilming L."/>
            <person name="Wray P.W."/>
            <person name="Hubbard T."/>
            <person name="Durbin R.M."/>
            <person name="Bentley D.R."/>
            <person name="Beck S."/>
            <person name="Rogers J."/>
        </authorList>
    </citation>
    <scope>NUCLEOTIDE SEQUENCE [LARGE SCALE GENOMIC DNA]</scope>
</reference>
<reference key="6">
    <citation type="submission" date="2002-01" db="EMBL/GenBank/DDBJ databases">
        <title>The nucleotide sequence of a long cDNA clone isolated from human spleen.</title>
        <authorList>
            <person name="Jikuya H."/>
            <person name="Takano J."/>
            <person name="Nomura N."/>
            <person name="Kikuno R."/>
            <person name="Nagase T."/>
            <person name="Ohara O."/>
        </authorList>
    </citation>
    <scope>NUCLEOTIDE SEQUENCE [LARGE SCALE MRNA] OF 1773-2896 (ISOFORMS 1/2)</scope>
    <source>
        <tissue>Spleen</tissue>
    </source>
</reference>
<reference key="7">
    <citation type="journal article" date="2004" name="Nat. Genet.">
        <title>Complete sequencing and characterization of 21,243 full-length human cDNAs.</title>
        <authorList>
            <person name="Ota T."/>
            <person name="Suzuki Y."/>
            <person name="Nishikawa T."/>
            <person name="Otsuki T."/>
            <person name="Sugiyama T."/>
            <person name="Irie R."/>
            <person name="Wakamatsu A."/>
            <person name="Hayashi K."/>
            <person name="Sato H."/>
            <person name="Nagai K."/>
            <person name="Kimura K."/>
            <person name="Makita H."/>
            <person name="Sekine M."/>
            <person name="Obayashi M."/>
            <person name="Nishi T."/>
            <person name="Shibahara T."/>
            <person name="Tanaka T."/>
            <person name="Ishii S."/>
            <person name="Yamamoto J."/>
            <person name="Saito K."/>
            <person name="Kawai Y."/>
            <person name="Isono Y."/>
            <person name="Nakamura Y."/>
            <person name="Nagahari K."/>
            <person name="Murakami K."/>
            <person name="Yasuda T."/>
            <person name="Iwayanagi T."/>
            <person name="Wagatsuma M."/>
            <person name="Shiratori A."/>
            <person name="Sudo H."/>
            <person name="Hosoiri T."/>
            <person name="Kaku Y."/>
            <person name="Kodaira H."/>
            <person name="Kondo H."/>
            <person name="Sugawara M."/>
            <person name="Takahashi M."/>
            <person name="Kanda K."/>
            <person name="Yokoi T."/>
            <person name="Furuya T."/>
            <person name="Kikkawa E."/>
            <person name="Omura Y."/>
            <person name="Abe K."/>
            <person name="Kamihara K."/>
            <person name="Katsuta N."/>
            <person name="Sato K."/>
            <person name="Tanikawa M."/>
            <person name="Yamazaki M."/>
            <person name="Ninomiya K."/>
            <person name="Ishibashi T."/>
            <person name="Yamashita H."/>
            <person name="Murakawa K."/>
            <person name="Fujimori K."/>
            <person name="Tanai H."/>
            <person name="Kimata M."/>
            <person name="Watanabe M."/>
            <person name="Hiraoka S."/>
            <person name="Chiba Y."/>
            <person name="Ishida S."/>
            <person name="Ono Y."/>
            <person name="Takiguchi S."/>
            <person name="Watanabe S."/>
            <person name="Yosida M."/>
            <person name="Hotuta T."/>
            <person name="Kusano J."/>
            <person name="Kanehori K."/>
            <person name="Takahashi-Fujii A."/>
            <person name="Hara H."/>
            <person name="Tanase T.-O."/>
            <person name="Nomura Y."/>
            <person name="Togiya S."/>
            <person name="Komai F."/>
            <person name="Hara R."/>
            <person name="Takeuchi K."/>
            <person name="Arita M."/>
            <person name="Imose N."/>
            <person name="Musashino K."/>
            <person name="Yuuki H."/>
            <person name="Oshima A."/>
            <person name="Sasaki N."/>
            <person name="Aotsuka S."/>
            <person name="Yoshikawa Y."/>
            <person name="Matsunawa H."/>
            <person name="Ichihara T."/>
            <person name="Shiohata N."/>
            <person name="Sano S."/>
            <person name="Moriya S."/>
            <person name="Momiyama H."/>
            <person name="Satoh N."/>
            <person name="Takami S."/>
            <person name="Terashima Y."/>
            <person name="Suzuki O."/>
            <person name="Nakagawa S."/>
            <person name="Senoh A."/>
            <person name="Mizoguchi H."/>
            <person name="Goto Y."/>
            <person name="Shimizu F."/>
            <person name="Wakebe H."/>
            <person name="Hishigaki H."/>
            <person name="Watanabe T."/>
            <person name="Sugiyama A."/>
            <person name="Takemoto M."/>
            <person name="Kawakami B."/>
            <person name="Yamazaki M."/>
            <person name="Watanabe K."/>
            <person name="Kumagai A."/>
            <person name="Itakura S."/>
            <person name="Fukuzumi Y."/>
            <person name="Fujimori Y."/>
            <person name="Komiyama M."/>
            <person name="Tashiro H."/>
            <person name="Tanigami A."/>
            <person name="Fujiwara T."/>
            <person name="Ono T."/>
            <person name="Yamada K."/>
            <person name="Fujii Y."/>
            <person name="Ozaki K."/>
            <person name="Hirao M."/>
            <person name="Ohmori Y."/>
            <person name="Kawabata A."/>
            <person name="Hikiji T."/>
            <person name="Kobatake N."/>
            <person name="Inagaki H."/>
            <person name="Ikema Y."/>
            <person name="Okamoto S."/>
            <person name="Okitani R."/>
            <person name="Kawakami T."/>
            <person name="Noguchi S."/>
            <person name="Itoh T."/>
            <person name="Shigeta K."/>
            <person name="Senba T."/>
            <person name="Matsumura K."/>
            <person name="Nakajima Y."/>
            <person name="Mizuno T."/>
            <person name="Morinaga M."/>
            <person name="Sasaki M."/>
            <person name="Togashi T."/>
            <person name="Oyama M."/>
            <person name="Hata H."/>
            <person name="Watanabe M."/>
            <person name="Komatsu T."/>
            <person name="Mizushima-Sugano J."/>
            <person name="Satoh T."/>
            <person name="Shirai Y."/>
            <person name="Takahashi Y."/>
            <person name="Nakagawa K."/>
            <person name="Okumura K."/>
            <person name="Nagase T."/>
            <person name="Nomura N."/>
            <person name="Kikuchi H."/>
            <person name="Masuho Y."/>
            <person name="Yamashita R."/>
            <person name="Nakai K."/>
            <person name="Yada T."/>
            <person name="Nakamura Y."/>
            <person name="Ohara O."/>
            <person name="Isogai T."/>
            <person name="Sugano S."/>
        </authorList>
    </citation>
    <scope>NUCLEOTIDE SEQUENCE [LARGE SCALE MRNA] OF 2441-2896 (ISOFORMS 1/2)</scope>
</reference>
<reference key="8">
    <citation type="journal article" date="2008" name="Proc. Natl. Acad. Sci. U.S.A.">
        <title>A quantitative atlas of mitotic phosphorylation.</title>
        <authorList>
            <person name="Dephoure N."/>
            <person name="Zhou C."/>
            <person name="Villen J."/>
            <person name="Beausoleil S.A."/>
            <person name="Bakalarski C.E."/>
            <person name="Elledge S.J."/>
            <person name="Gygi S.P."/>
        </authorList>
    </citation>
    <scope>PHOSPHORYLATION [LARGE SCALE ANALYSIS] AT SER-1253</scope>
    <scope>IDENTIFICATION BY MASS SPECTROMETRY [LARGE SCALE ANALYSIS]</scope>
    <source>
        <tissue>Cervix carcinoma</tissue>
    </source>
</reference>
<reference key="9">
    <citation type="journal article" date="2011" name="BMC Syst. Biol.">
        <title>Initial characterization of the human central proteome.</title>
        <authorList>
            <person name="Burkard T.R."/>
            <person name="Planyavsky M."/>
            <person name="Kaupe I."/>
            <person name="Breitwieser F.P."/>
            <person name="Buerckstuemmer T."/>
            <person name="Bennett K.L."/>
            <person name="Superti-Furga G."/>
            <person name="Colinge J."/>
        </authorList>
    </citation>
    <scope>IDENTIFICATION BY MASS SPECTROMETRY [LARGE SCALE ANALYSIS]</scope>
</reference>
<reference key="10">
    <citation type="journal article" date="2013" name="J. Proteome Res.">
        <title>Toward a comprehensive characterization of a human cancer cell phosphoproteome.</title>
        <authorList>
            <person name="Zhou H."/>
            <person name="Di Palma S."/>
            <person name="Preisinger C."/>
            <person name="Peng M."/>
            <person name="Polat A.N."/>
            <person name="Heck A.J."/>
            <person name="Mohammed S."/>
        </authorList>
    </citation>
    <scope>PHOSPHORYLATION [LARGE SCALE ANALYSIS] AT SER-1253</scope>
    <scope>IDENTIFICATION BY MASS SPECTROMETRY [LARGE SCALE ANALYSIS]</scope>
    <source>
        <tissue>Cervix carcinoma</tissue>
    </source>
</reference>
<reference key="11">
    <citation type="journal article" date="2013" name="Mol. Endocrinol.">
        <title>THRAP3 interacts with HELZ2 and plays a novel role in adipocyte differentiation.</title>
        <authorList>
            <person name="Katano-Toki A."/>
            <person name="Satoh T."/>
            <person name="Tomaru T."/>
            <person name="Yoshino S."/>
            <person name="Ishizuka T."/>
            <person name="Ishii S."/>
            <person name="Ozawa A."/>
            <person name="Shibusawa N."/>
            <person name="Tsuchiya T."/>
            <person name="Saito T."/>
            <person name="Shimizu H."/>
            <person name="Hashimoto K."/>
            <person name="Okada S."/>
            <person name="Yamada M."/>
            <person name="Mori M."/>
        </authorList>
    </citation>
    <scope>FUNCTION</scope>
    <scope>INTERACTION WITH PPARG AND THRAP3</scope>
</reference>
<reference key="12">
    <citation type="journal article" date="2014" name="J. Proteomics">
        <title>An enzyme assisted RP-RPLC approach for in-depth analysis of human liver phosphoproteome.</title>
        <authorList>
            <person name="Bian Y."/>
            <person name="Song C."/>
            <person name="Cheng K."/>
            <person name="Dong M."/>
            <person name="Wang F."/>
            <person name="Huang J."/>
            <person name="Sun D."/>
            <person name="Wang L."/>
            <person name="Ye M."/>
            <person name="Zou H."/>
        </authorList>
    </citation>
    <scope>IDENTIFICATION BY MASS SPECTROMETRY [LARGE SCALE ANALYSIS]</scope>
    <source>
        <tissue>Liver</tissue>
    </source>
</reference>
<reference key="13">
    <citation type="journal article" date="2014" name="Mol. Cell. Proteomics">
        <title>Immunoaffinity enrichment and mass spectrometry analysis of protein methylation.</title>
        <authorList>
            <person name="Guo A."/>
            <person name="Gu H."/>
            <person name="Zhou J."/>
            <person name="Mulhern D."/>
            <person name="Wang Y."/>
            <person name="Lee K.A."/>
            <person name="Yang V."/>
            <person name="Aguiar M."/>
            <person name="Kornhauser J."/>
            <person name="Jia X."/>
            <person name="Ren J."/>
            <person name="Beausoleil S.A."/>
            <person name="Silva J.C."/>
            <person name="Vemulapalli V."/>
            <person name="Bedford M.T."/>
            <person name="Comb M.J."/>
        </authorList>
    </citation>
    <scope>IDENTIFICATION BY MASS SPECTROMETRY [LARGE SCALE ANALYSIS]</scope>
    <source>
        <tissue>Colon carcinoma</tissue>
    </source>
</reference>
<reference key="14">
    <citation type="journal article" date="2023" name="Nucleic Acids Res.">
        <title>HELZ2: a new, interferon-regulated, human 3'-5' exoribonuclease of the RNB family is expressed from a non-canonical initiation codon.</title>
        <authorList>
            <person name="Huntzinger E."/>
            <person name="Sinteff J."/>
            <person name="Morlet B."/>
            <person name="Seraphin B."/>
        </authorList>
    </citation>
    <scope>FUNCTION</scope>
    <scope>CATALYTIC ACTIVITY</scope>
    <scope>INDUCTION</scope>
    <scope>IDENTIFICATION OF THE NON-CANONICAL START CODON</scope>
    <scope>IDENTIFICATION BY MASS SPECTROMETRY</scope>
    <scope>MUTAGENESIS OF CYS-1598; ASP-1601; SER-1920; ARG-1923 AND THR-2151</scope>
</reference>
<gene>
    <name evidence="13" type="primary">HELZ2</name>
    <name type="synonym">KIAA1769</name>
    <name type="synonym">PRIC285</name>
</gene>
<organism>
    <name type="scientific">Homo sapiens</name>
    <name type="common">Human</name>
    <dbReference type="NCBI Taxonomy" id="9606"/>
    <lineage>
        <taxon>Eukaryota</taxon>
        <taxon>Metazoa</taxon>
        <taxon>Chordata</taxon>
        <taxon>Craniata</taxon>
        <taxon>Vertebrata</taxon>
        <taxon>Euteleostomi</taxon>
        <taxon>Mammalia</taxon>
        <taxon>Eutheria</taxon>
        <taxon>Euarchontoglires</taxon>
        <taxon>Primates</taxon>
        <taxon>Haplorrhini</taxon>
        <taxon>Catarrhini</taxon>
        <taxon>Hominidae</taxon>
        <taxon>Homo</taxon>
    </lineage>
</organism>
<name>HELZ2_HUMAN</name>
<comment type="function">
    <text evidence="6 7 8">Can degrade highly structured RNAs through its concerted ATP-dependent RNA helicase and 3' to 5' exoribonuclease activities (PubMed:37602378). Shows a strong preference for pyrimidine over purine residues for its nuclease activity (PubMed:37602378). Acts as a transcriptional coactivator for a number of nuclear receptors including PPARA, PPARG, THRA, THRB and RXRA (PubMed:16239304, PubMed:23525231).</text>
</comment>
<comment type="catalytic activity">
    <reaction evidence="8">
        <text>Exonucleolytic cleavage in the 3'- to 5'-direction to yield nucleoside 5'-phosphates.</text>
        <dbReference type="EC" id="3.1.13.1"/>
    </reaction>
</comment>
<comment type="catalytic activity">
    <reaction evidence="8">
        <text>ATP + H2O = ADP + phosphate + H(+)</text>
        <dbReference type="Rhea" id="RHEA:13065"/>
        <dbReference type="ChEBI" id="CHEBI:15377"/>
        <dbReference type="ChEBI" id="CHEBI:15378"/>
        <dbReference type="ChEBI" id="CHEBI:30616"/>
        <dbReference type="ChEBI" id="CHEBI:43474"/>
        <dbReference type="ChEBI" id="CHEBI:456216"/>
        <dbReference type="EC" id="3.6.4.13"/>
    </reaction>
</comment>
<comment type="subunit">
    <text evidence="6 7">Interacts with PPARA (via DNA-binding domain) and PPARG; the interaction stimulates the transcriptional activity of PPARA and PPARG. Interacts with THRAP3; the interaction is direct and HELZ2 and THRAP3 synergistically enhance the transcriptional activity of PPARG. It is probably part of the peroxisome proliferator activated receptor alpha interacting complex (PRIC).</text>
</comment>
<comment type="subcellular location">
    <subcellularLocation>
        <location evidence="8">Cytoplasm</location>
    </subcellularLocation>
</comment>
<comment type="alternative products">
    <event type="alternative splicing"/>
    <isoform>
        <id>Q9BYK8-1</id>
        <name>1</name>
        <name>PDIP1-beta</name>
        <sequence type="displayed"/>
    </isoform>
    <isoform>
        <id>Q9BYK8-2</id>
        <name>2</name>
        <name>PDIP1-alpha</name>
        <sequence type="described" ref="VSP_007297 VSP_007298"/>
    </isoform>
</comment>
<comment type="tissue specificity">
    <text evidence="6">Expressed in various tissues including heart, pancreas, skeletal muscle, colon, spleen, liver, kidney, lung, peripheral blood and placenta.</text>
</comment>
<comment type="induction">
    <text evidence="8">By interferon.</text>
</comment>
<comment type="domain">
    <text evidence="6">Contains 5 Leu-Xaa-Xaa-Leu-Leu (LXXLL) motifs. These motifs are not required for interaction with PPARG.</text>
</comment>
<comment type="similarity">
    <text evidence="11">Belongs to the DNA2/NAM7 helicase family.</text>
</comment>
<comment type="caution">
    <text evidence="11">PubMed:12189208 experiments have been carried out partly in rat and partly in human.</text>
</comment>
<comment type="caution">
    <text evidence="12">This sequence initiates at a non-canonical GUG codon.</text>
</comment>
<comment type="sequence caution" evidence="11">
    <conflict type="erroneous initiation">
        <sequence resource="EMBL-CDS" id="BAB21860"/>
    </conflict>
    <text>Extended N-terminus.</text>
</comment>
<comment type="sequence caution" evidence="11">
    <conflict type="frameshift">
        <sequence resource="EMBL-CDS" id="BAB70969"/>
    </conflict>
</comment>
<comment type="sequence caution" evidence="11">
    <conflict type="erroneous initiation">
        <sequence resource="EMBL-CDS" id="BAE46995"/>
    </conflict>
    <text>Truncated N-terminus.</text>
</comment>
<keyword id="KW-0010">Activator</keyword>
<keyword id="KW-0025">Alternative splicing</keyword>
<keyword id="KW-0067">ATP-binding</keyword>
<keyword id="KW-0963">Cytoplasm</keyword>
<keyword id="KW-0238">DNA-binding</keyword>
<keyword id="KW-0269">Exonuclease</keyword>
<keyword id="KW-0347">Helicase</keyword>
<keyword id="KW-0378">Hydrolase</keyword>
<keyword id="KW-0479">Metal-binding</keyword>
<keyword id="KW-0540">Nuclease</keyword>
<keyword id="KW-0547">Nucleotide-binding</keyword>
<keyword id="KW-0597">Phosphoprotein</keyword>
<keyword id="KW-1267">Proteomics identification</keyword>
<keyword id="KW-1185">Reference proteome</keyword>
<keyword id="KW-0677">Repeat</keyword>
<keyword id="KW-0694">RNA-binding</keyword>
<keyword id="KW-0804">Transcription</keyword>
<keyword id="KW-0805">Transcription regulation</keyword>
<keyword id="KW-0862">Zinc</keyword>
<keyword id="KW-0863">Zinc-finger</keyword>
<dbReference type="EC" id="3.1.13.1" evidence="8"/>
<dbReference type="EC" id="3.6.4.13" evidence="8"/>
<dbReference type="EMBL" id="AF517673">
    <property type="protein sequence ID" value="AAM74197.1"/>
    <property type="molecule type" value="mRNA"/>
</dbReference>
<dbReference type="EMBL" id="AB201715">
    <property type="protein sequence ID" value="BAE46995.1"/>
    <property type="status" value="ALT_INIT"/>
    <property type="molecule type" value="mRNA"/>
</dbReference>
<dbReference type="EMBL" id="AB051556">
    <property type="protein sequence ID" value="BAB21860.2"/>
    <property type="status" value="ALT_INIT"/>
    <property type="molecule type" value="mRNA"/>
</dbReference>
<dbReference type="EMBL" id="AL121829">
    <property type="status" value="NOT_ANNOTATED_CDS"/>
    <property type="molecule type" value="Genomic_DNA"/>
</dbReference>
<dbReference type="EMBL" id="AK074171">
    <property type="protein sequence ID" value="BAB84997.1"/>
    <property type="molecule type" value="mRNA"/>
</dbReference>
<dbReference type="EMBL" id="AK055611">
    <property type="protein sequence ID" value="BAB70969.1"/>
    <property type="status" value="ALT_FRAME"/>
    <property type="molecule type" value="mRNA"/>
</dbReference>
<dbReference type="CCDS" id="CCDS13527.1">
    <molecule id="Q9BYK8-2"/>
</dbReference>
<dbReference type="RefSeq" id="NP_001032412.2">
    <property type="nucleotide sequence ID" value="NM_001037335.2"/>
</dbReference>
<dbReference type="RefSeq" id="NP_208384.3">
    <molecule id="Q9BYK8-2"/>
    <property type="nucleotide sequence ID" value="NM_033405.3"/>
</dbReference>
<dbReference type="SMR" id="Q9BYK8"/>
<dbReference type="BioGRID" id="124528">
    <property type="interactions" value="74"/>
</dbReference>
<dbReference type="CORUM" id="Q9BYK8"/>
<dbReference type="FunCoup" id="Q9BYK8">
    <property type="interactions" value="794"/>
</dbReference>
<dbReference type="IntAct" id="Q9BYK8">
    <property type="interactions" value="33"/>
</dbReference>
<dbReference type="MINT" id="Q9BYK8"/>
<dbReference type="STRING" id="9606.ENSP00000417401"/>
<dbReference type="GlyGen" id="Q9BYK8">
    <property type="glycosylation" value="3 sites, 1 N-linked glycan (1 site)"/>
</dbReference>
<dbReference type="iPTMnet" id="Q9BYK8"/>
<dbReference type="PhosphoSitePlus" id="Q9BYK8"/>
<dbReference type="SwissPalm" id="Q9BYK8"/>
<dbReference type="BioMuta" id="HELZ2"/>
<dbReference type="DMDM" id="317373591"/>
<dbReference type="jPOST" id="Q9BYK8"/>
<dbReference type="MassIVE" id="Q9BYK8"/>
<dbReference type="PaxDb" id="9606-ENSP00000417401"/>
<dbReference type="PeptideAtlas" id="Q9BYK8"/>
<dbReference type="ProteomicsDB" id="79663">
    <molecule id="Q9BYK8-1"/>
</dbReference>
<dbReference type="ProteomicsDB" id="79664">
    <molecule id="Q9BYK8-2"/>
</dbReference>
<dbReference type="Pumba" id="Q9BYK8"/>
<dbReference type="Antibodypedia" id="63897">
    <property type="antibodies" value="46 antibodies from 17 providers"/>
</dbReference>
<dbReference type="DNASU" id="85441"/>
<dbReference type="Ensembl" id="ENST00000427522.6">
    <molecule id="Q9BYK8-2"/>
    <property type="protein sequence ID" value="ENSP00000393257.2"/>
    <property type="gene ID" value="ENSG00000130589.16"/>
</dbReference>
<dbReference type="GeneID" id="85441"/>
<dbReference type="KEGG" id="hsa:85441"/>
<dbReference type="UCSC" id="uc002yfl.2">
    <molecule id="Q9BYK8-1"/>
    <property type="organism name" value="human"/>
</dbReference>
<dbReference type="AGR" id="HGNC:30021"/>
<dbReference type="CTD" id="85441"/>
<dbReference type="DisGeNET" id="85441"/>
<dbReference type="GeneCards" id="HELZ2"/>
<dbReference type="HGNC" id="HGNC:30021">
    <property type="gene designation" value="HELZ2"/>
</dbReference>
<dbReference type="HPA" id="ENSG00000130589">
    <property type="expression patterns" value="Low tissue specificity"/>
</dbReference>
<dbReference type="MIM" id="611265">
    <property type="type" value="gene"/>
</dbReference>
<dbReference type="neXtProt" id="NX_Q9BYK8"/>
<dbReference type="OpenTargets" id="ENSG00000130589"/>
<dbReference type="VEuPathDB" id="HostDB:ENSG00000130589"/>
<dbReference type="eggNOG" id="KOG1804">
    <property type="taxonomic scope" value="Eukaryota"/>
</dbReference>
<dbReference type="eggNOG" id="KOG2102">
    <property type="taxonomic scope" value="Eukaryota"/>
</dbReference>
<dbReference type="GeneTree" id="ENSGT00940000160694"/>
<dbReference type="HOGENOM" id="CLU_000407_0_0_1"/>
<dbReference type="InParanoid" id="Q9BYK8"/>
<dbReference type="OrthoDB" id="2285229at2759"/>
<dbReference type="PAN-GO" id="Q9BYK8">
    <property type="GO annotations" value="4 GO annotations based on evolutionary models"/>
</dbReference>
<dbReference type="PhylomeDB" id="Q9BYK8"/>
<dbReference type="PathwayCommons" id="Q9BYK8"/>
<dbReference type="Reactome" id="R-HSA-1368082">
    <property type="pathway name" value="RORA activates gene expression"/>
</dbReference>
<dbReference type="Reactome" id="R-HSA-1368108">
    <property type="pathway name" value="BMAL1:CLOCK,NPAS2 activates circadian gene expression"/>
</dbReference>
<dbReference type="Reactome" id="R-HSA-1989781">
    <property type="pathway name" value="PPARA activates gene expression"/>
</dbReference>
<dbReference type="Reactome" id="R-HSA-2151201">
    <property type="pathway name" value="Transcriptional activation of mitochondrial biogenesis"/>
</dbReference>
<dbReference type="Reactome" id="R-HSA-2426168">
    <property type="pathway name" value="Activation of gene expression by SREBF (SREBP)"/>
</dbReference>
<dbReference type="Reactome" id="R-HSA-381340">
    <property type="pathway name" value="Transcriptional regulation of white adipocyte differentiation"/>
</dbReference>
<dbReference type="Reactome" id="R-HSA-400206">
    <property type="pathway name" value="Regulation of lipid metabolism by PPARalpha"/>
</dbReference>
<dbReference type="Reactome" id="R-HSA-400253">
    <property type="pathway name" value="Circadian Clock"/>
</dbReference>
<dbReference type="Reactome" id="R-HSA-9707564">
    <property type="pathway name" value="Cytoprotection by HMOX1"/>
</dbReference>
<dbReference type="Reactome" id="R-HSA-9707616">
    <property type="pathway name" value="Heme signaling"/>
</dbReference>
<dbReference type="SignaLink" id="Q9BYK8"/>
<dbReference type="BioGRID-ORCS" id="85441">
    <property type="hits" value="26 hits in 1163 CRISPR screens"/>
</dbReference>
<dbReference type="CD-CODE" id="232F8A39">
    <property type="entry name" value="P-body"/>
</dbReference>
<dbReference type="CD-CODE" id="DEE660B4">
    <property type="entry name" value="Stress granule"/>
</dbReference>
<dbReference type="ChiTaRS" id="HELZ2">
    <property type="organism name" value="human"/>
</dbReference>
<dbReference type="GeneWiki" id="PRIC285"/>
<dbReference type="GenomeRNAi" id="85441"/>
<dbReference type="Pharos" id="Q9BYK8">
    <property type="development level" value="Tdark"/>
</dbReference>
<dbReference type="PRO" id="PR:Q9BYK8"/>
<dbReference type="Proteomes" id="UP000005640">
    <property type="component" value="Chromosome 20"/>
</dbReference>
<dbReference type="RNAct" id="Q9BYK8">
    <property type="molecule type" value="protein"/>
</dbReference>
<dbReference type="Bgee" id="ENSG00000130589">
    <property type="expression patterns" value="Expressed in granulocyte and 99 other cell types or tissues"/>
</dbReference>
<dbReference type="GO" id="GO:0005737">
    <property type="term" value="C:cytoplasm"/>
    <property type="evidence" value="ECO:0000314"/>
    <property type="project" value="UniProtKB"/>
</dbReference>
<dbReference type="GO" id="GO:0005829">
    <property type="term" value="C:cytosol"/>
    <property type="evidence" value="ECO:0000318"/>
    <property type="project" value="GO_Central"/>
</dbReference>
<dbReference type="GO" id="GO:0016020">
    <property type="term" value="C:membrane"/>
    <property type="evidence" value="ECO:0007005"/>
    <property type="project" value="UniProtKB"/>
</dbReference>
<dbReference type="GO" id="GO:0005654">
    <property type="term" value="C:nucleoplasm"/>
    <property type="evidence" value="ECO:0000304"/>
    <property type="project" value="Reactome"/>
</dbReference>
<dbReference type="GO" id="GO:0043186">
    <property type="term" value="C:P granule"/>
    <property type="evidence" value="ECO:0000318"/>
    <property type="project" value="GO_Central"/>
</dbReference>
<dbReference type="GO" id="GO:0005524">
    <property type="term" value="F:ATP binding"/>
    <property type="evidence" value="ECO:0007669"/>
    <property type="project" value="UniProtKB-KW"/>
</dbReference>
<dbReference type="GO" id="GO:0016887">
    <property type="term" value="F:ATP hydrolysis activity"/>
    <property type="evidence" value="ECO:0007669"/>
    <property type="project" value="RHEA"/>
</dbReference>
<dbReference type="GO" id="GO:0003677">
    <property type="term" value="F:DNA binding"/>
    <property type="evidence" value="ECO:0007669"/>
    <property type="project" value="UniProtKB-KW"/>
</dbReference>
<dbReference type="GO" id="GO:0008859">
    <property type="term" value="F:exoribonuclease II activity"/>
    <property type="evidence" value="ECO:0000314"/>
    <property type="project" value="UniProtKB"/>
</dbReference>
<dbReference type="GO" id="GO:0003723">
    <property type="term" value="F:RNA binding"/>
    <property type="evidence" value="ECO:0007005"/>
    <property type="project" value="UniProtKB"/>
</dbReference>
<dbReference type="GO" id="GO:0003724">
    <property type="term" value="F:RNA helicase activity"/>
    <property type="evidence" value="ECO:0000314"/>
    <property type="project" value="UniProtKB"/>
</dbReference>
<dbReference type="GO" id="GO:0003713">
    <property type="term" value="F:transcription coactivator activity"/>
    <property type="evidence" value="ECO:0000314"/>
    <property type="project" value="GO_Central"/>
</dbReference>
<dbReference type="GO" id="GO:0008270">
    <property type="term" value="F:zinc ion binding"/>
    <property type="evidence" value="ECO:0007669"/>
    <property type="project" value="UniProtKB-KW"/>
</dbReference>
<dbReference type="GO" id="GO:0045944">
    <property type="term" value="P:positive regulation of transcription by RNA polymerase II"/>
    <property type="evidence" value="ECO:0000314"/>
    <property type="project" value="UniProtKB"/>
</dbReference>
<dbReference type="GO" id="GO:0035194">
    <property type="term" value="P:regulatory ncRNA-mediated post-transcriptional gene silencing"/>
    <property type="evidence" value="ECO:0000318"/>
    <property type="project" value="GO_Central"/>
</dbReference>
<dbReference type="CDD" id="cd18040">
    <property type="entry name" value="DEXXc_HELZ2-C"/>
    <property type="match status" value="1"/>
</dbReference>
<dbReference type="CDD" id="cd18076">
    <property type="entry name" value="DEXXQc_HELZ2-N"/>
    <property type="match status" value="1"/>
</dbReference>
<dbReference type="CDD" id="cd18808">
    <property type="entry name" value="SF1_C_Upf1"/>
    <property type="match status" value="2"/>
</dbReference>
<dbReference type="FunFam" id="3.40.50.300:FF:001803">
    <property type="entry name" value="Helicase with zinc finger 2"/>
    <property type="match status" value="1"/>
</dbReference>
<dbReference type="FunFam" id="3.40.50.300:FF:001313">
    <property type="entry name" value="Helicase with zinc finger domain 2"/>
    <property type="match status" value="1"/>
</dbReference>
<dbReference type="FunFam" id="3.40.50.300:FF:001373">
    <property type="entry name" value="Helicase with zinc finger domain 2"/>
    <property type="match status" value="1"/>
</dbReference>
<dbReference type="FunFam" id="3.40.50.300:FF:001413">
    <property type="entry name" value="Helicase with zinc finger domain 2"/>
    <property type="match status" value="1"/>
</dbReference>
<dbReference type="Gene3D" id="3.40.50.300">
    <property type="entry name" value="P-loop containing nucleotide triphosphate hydrolases"/>
    <property type="match status" value="4"/>
</dbReference>
<dbReference type="InterPro" id="IPR050534">
    <property type="entry name" value="Coronavir_polyprotein_1ab"/>
</dbReference>
<dbReference type="InterPro" id="IPR041679">
    <property type="entry name" value="DNA2/NAM7-like_C"/>
</dbReference>
<dbReference type="InterPro" id="IPR041677">
    <property type="entry name" value="DNA2/NAM7_AAA_11"/>
</dbReference>
<dbReference type="InterPro" id="IPR012340">
    <property type="entry name" value="NA-bd_OB-fold"/>
</dbReference>
<dbReference type="InterPro" id="IPR056787">
    <property type="entry name" value="OB_HELZ2"/>
</dbReference>
<dbReference type="InterPro" id="IPR027417">
    <property type="entry name" value="P-loop_NTPase"/>
</dbReference>
<dbReference type="InterPro" id="IPR001900">
    <property type="entry name" value="RNase_II/R"/>
</dbReference>
<dbReference type="InterPro" id="IPR022966">
    <property type="entry name" value="RNase_II/R_CS"/>
</dbReference>
<dbReference type="InterPro" id="IPR047187">
    <property type="entry name" value="SF1_C_Upf1"/>
</dbReference>
<dbReference type="InterPro" id="IPR036236">
    <property type="entry name" value="Znf_C2H2_sf"/>
</dbReference>
<dbReference type="InterPro" id="IPR000571">
    <property type="entry name" value="Znf_CCCH"/>
</dbReference>
<dbReference type="PANTHER" id="PTHR43788:SF8">
    <property type="entry name" value="DNA-BINDING PROTEIN SMUBP-2"/>
    <property type="match status" value="1"/>
</dbReference>
<dbReference type="PANTHER" id="PTHR43788">
    <property type="entry name" value="DNA2/NAM7 HELICASE FAMILY MEMBER"/>
    <property type="match status" value="1"/>
</dbReference>
<dbReference type="Pfam" id="PF13086">
    <property type="entry name" value="AAA_11"/>
    <property type="match status" value="3"/>
</dbReference>
<dbReference type="Pfam" id="PF13087">
    <property type="entry name" value="AAA_12"/>
    <property type="match status" value="2"/>
</dbReference>
<dbReference type="Pfam" id="PF25049">
    <property type="entry name" value="OB_HELZ2"/>
    <property type="match status" value="1"/>
</dbReference>
<dbReference type="Pfam" id="PF00773">
    <property type="entry name" value="RNB"/>
    <property type="match status" value="1"/>
</dbReference>
<dbReference type="SMART" id="SM00955">
    <property type="entry name" value="RNB"/>
    <property type="match status" value="1"/>
</dbReference>
<dbReference type="SUPFAM" id="SSF57667">
    <property type="entry name" value="beta-beta-alpha zinc fingers"/>
    <property type="match status" value="1"/>
</dbReference>
<dbReference type="SUPFAM" id="SSF50249">
    <property type="entry name" value="Nucleic acid-binding proteins"/>
    <property type="match status" value="2"/>
</dbReference>
<dbReference type="SUPFAM" id="SSF52540">
    <property type="entry name" value="P-loop containing nucleoside triphosphate hydrolases"/>
    <property type="match status" value="2"/>
</dbReference>
<dbReference type="PROSITE" id="PS50103">
    <property type="entry name" value="ZF_C3H1"/>
    <property type="match status" value="3"/>
</dbReference>
<dbReference type="PROSITE" id="PS00028">
    <property type="entry name" value="ZINC_FINGER_C2H2_1"/>
    <property type="match status" value="1"/>
</dbReference>